<dbReference type="EC" id="4.2.1.59" evidence="1"/>
<dbReference type="EC" id="5.3.3.14" evidence="1"/>
<dbReference type="EMBL" id="CP000247">
    <property type="protein sequence ID" value="ABG68972.1"/>
    <property type="status" value="ALT_INIT"/>
    <property type="molecule type" value="Genomic_DNA"/>
</dbReference>
<dbReference type="RefSeq" id="WP_011579105.1">
    <property type="nucleotide sequence ID" value="NC_008253.1"/>
</dbReference>
<dbReference type="SMR" id="Q0TJA7"/>
<dbReference type="KEGG" id="ecp:ECP_0959"/>
<dbReference type="HOGENOM" id="CLU_097925_0_0_6"/>
<dbReference type="UniPathway" id="UPA00094"/>
<dbReference type="Proteomes" id="UP000009182">
    <property type="component" value="Chromosome"/>
</dbReference>
<dbReference type="GO" id="GO:0005737">
    <property type="term" value="C:cytoplasm"/>
    <property type="evidence" value="ECO:0007669"/>
    <property type="project" value="UniProtKB-SubCell"/>
</dbReference>
<dbReference type="GO" id="GO:0019171">
    <property type="term" value="F:(3R)-hydroxyacyl-[acyl-carrier-protein] dehydratase activity"/>
    <property type="evidence" value="ECO:0007669"/>
    <property type="project" value="UniProtKB-UniRule"/>
</dbReference>
<dbReference type="GO" id="GO:0034017">
    <property type="term" value="F:trans-2-decenoyl-acyl-carrier-protein isomerase activity"/>
    <property type="evidence" value="ECO:0007669"/>
    <property type="project" value="UniProtKB-UniRule"/>
</dbReference>
<dbReference type="GO" id="GO:0006636">
    <property type="term" value="P:unsaturated fatty acid biosynthetic process"/>
    <property type="evidence" value="ECO:0007669"/>
    <property type="project" value="UniProtKB-UniRule"/>
</dbReference>
<dbReference type="CDD" id="cd01287">
    <property type="entry name" value="FabA"/>
    <property type="match status" value="1"/>
</dbReference>
<dbReference type="FunFam" id="3.10.129.10:FF:000003">
    <property type="entry name" value="3-hydroxydecanoyl-[acyl-carrier-protein] dehydratase"/>
    <property type="match status" value="1"/>
</dbReference>
<dbReference type="Gene3D" id="3.10.129.10">
    <property type="entry name" value="Hotdog Thioesterase"/>
    <property type="match status" value="1"/>
</dbReference>
<dbReference type="HAMAP" id="MF_00405">
    <property type="entry name" value="FabA"/>
    <property type="match status" value="1"/>
</dbReference>
<dbReference type="InterPro" id="IPR010083">
    <property type="entry name" value="FabA"/>
</dbReference>
<dbReference type="InterPro" id="IPR013114">
    <property type="entry name" value="FabA_FabZ"/>
</dbReference>
<dbReference type="InterPro" id="IPR029069">
    <property type="entry name" value="HotDog_dom_sf"/>
</dbReference>
<dbReference type="NCBIfam" id="TIGR01749">
    <property type="entry name" value="fabA"/>
    <property type="match status" value="1"/>
</dbReference>
<dbReference type="NCBIfam" id="NF003509">
    <property type="entry name" value="PRK05174.1"/>
    <property type="match status" value="1"/>
</dbReference>
<dbReference type="PANTHER" id="PTHR30272">
    <property type="entry name" value="3-HYDROXYACYL-[ACYL-CARRIER-PROTEIN] DEHYDRATASE"/>
    <property type="match status" value="1"/>
</dbReference>
<dbReference type="PANTHER" id="PTHR30272:SF8">
    <property type="entry name" value="3-HYDROXYDECANOYL-[ACYL-CARRIER-PROTEIN] DEHYDRATASE"/>
    <property type="match status" value="1"/>
</dbReference>
<dbReference type="Pfam" id="PF07977">
    <property type="entry name" value="FabA"/>
    <property type="match status" value="1"/>
</dbReference>
<dbReference type="SUPFAM" id="SSF54637">
    <property type="entry name" value="Thioesterase/thiol ester dehydrase-isomerase"/>
    <property type="match status" value="1"/>
</dbReference>
<comment type="function">
    <text evidence="1">Necessary for the introduction of cis unsaturation into fatty acids. Catalyzes the dehydration of (3R)-3-hydroxydecanoyl-ACP to E-(2)-decenoyl-ACP and then its isomerization to Z-(3)-decenoyl-ACP. Can catalyze the dehydratase reaction for beta-hydroxyacyl-ACPs with saturated chain lengths up to 16:0, being most active on intermediate chain length.</text>
</comment>
<comment type="catalytic activity">
    <reaction evidence="1">
        <text>a (3R)-hydroxyacyl-[ACP] = a (2E)-enoyl-[ACP] + H2O</text>
        <dbReference type="Rhea" id="RHEA:13097"/>
        <dbReference type="Rhea" id="RHEA-COMP:9925"/>
        <dbReference type="Rhea" id="RHEA-COMP:9945"/>
        <dbReference type="ChEBI" id="CHEBI:15377"/>
        <dbReference type="ChEBI" id="CHEBI:78784"/>
        <dbReference type="ChEBI" id="CHEBI:78827"/>
        <dbReference type="EC" id="4.2.1.59"/>
    </reaction>
</comment>
<comment type="catalytic activity">
    <reaction evidence="1">
        <text>(3R)-hydroxydecanoyl-[ACP] = (2E)-decenoyl-[ACP] + H2O</text>
        <dbReference type="Rhea" id="RHEA:41860"/>
        <dbReference type="Rhea" id="RHEA-COMP:9638"/>
        <dbReference type="Rhea" id="RHEA-COMP:9639"/>
        <dbReference type="ChEBI" id="CHEBI:15377"/>
        <dbReference type="ChEBI" id="CHEBI:78466"/>
        <dbReference type="ChEBI" id="CHEBI:78467"/>
    </reaction>
</comment>
<comment type="catalytic activity">
    <reaction evidence="1">
        <text>(2E)-decenoyl-[ACP] = (3Z)-decenoyl-[ACP]</text>
        <dbReference type="Rhea" id="RHEA:23568"/>
        <dbReference type="Rhea" id="RHEA-COMP:9639"/>
        <dbReference type="Rhea" id="RHEA-COMP:9927"/>
        <dbReference type="ChEBI" id="CHEBI:78467"/>
        <dbReference type="ChEBI" id="CHEBI:78798"/>
        <dbReference type="EC" id="5.3.3.14"/>
    </reaction>
</comment>
<comment type="pathway">
    <text evidence="1">Lipid metabolism; fatty acid biosynthesis.</text>
</comment>
<comment type="subunit">
    <text evidence="1">Homodimer.</text>
</comment>
<comment type="subcellular location">
    <subcellularLocation>
        <location evidence="1">Cytoplasm</location>
    </subcellularLocation>
</comment>
<comment type="similarity">
    <text evidence="1">Belongs to the thioester dehydratase family. FabA subfamily.</text>
</comment>
<comment type="sequence caution" evidence="2">
    <conflict type="erroneous initiation">
        <sequence resource="EMBL-CDS" id="ABG68972"/>
    </conflict>
</comment>
<keyword id="KW-0963">Cytoplasm</keyword>
<keyword id="KW-0275">Fatty acid biosynthesis</keyword>
<keyword id="KW-0276">Fatty acid metabolism</keyword>
<keyword id="KW-0413">Isomerase</keyword>
<keyword id="KW-0444">Lipid biosynthesis</keyword>
<keyword id="KW-0443">Lipid metabolism</keyword>
<keyword id="KW-0456">Lyase</keyword>
<gene>
    <name evidence="1" type="primary">fabA</name>
    <name type="ordered locus">ECP_0959</name>
</gene>
<proteinExistence type="inferred from homology"/>
<name>FABA_ECOL5</name>
<evidence type="ECO:0000255" key="1">
    <source>
        <dbReference type="HAMAP-Rule" id="MF_00405"/>
    </source>
</evidence>
<evidence type="ECO:0000305" key="2"/>
<reference key="1">
    <citation type="journal article" date="2006" name="Mol. Microbiol.">
        <title>Role of pathogenicity island-associated integrases in the genome plasticity of uropathogenic Escherichia coli strain 536.</title>
        <authorList>
            <person name="Hochhut B."/>
            <person name="Wilde C."/>
            <person name="Balling G."/>
            <person name="Middendorf B."/>
            <person name="Dobrindt U."/>
            <person name="Brzuszkiewicz E."/>
            <person name="Gottschalk G."/>
            <person name="Carniel E."/>
            <person name="Hacker J."/>
        </authorList>
    </citation>
    <scope>NUCLEOTIDE SEQUENCE [LARGE SCALE GENOMIC DNA]</scope>
    <source>
        <strain>536 / UPEC</strain>
    </source>
</reference>
<accession>Q0TJA7</accession>
<sequence>MVDKRESYTKEDLLASGRGELFDAKGPQLPAPNMLMMDRVVKMTETGGNFDKGYVEAELDINPDLWFFGCHFIGDPVMPGCLGLDAMWQLVGFYLGWLGGEGKGRALGVGEVKFTGQVLPTAKKVTYRIHFKRIVNRRLIMGLADGEVLVDGRLIYTASDLKVGLFQDTSAF</sequence>
<protein>
    <recommendedName>
        <fullName evidence="1">3-hydroxydecanoyl-[acyl-carrier-protein] dehydratase</fullName>
        <ecNumber evidence="1">4.2.1.59</ecNumber>
    </recommendedName>
    <alternativeName>
        <fullName evidence="1">3-hydroxyacyl-[acyl-carrier-protein] dehydratase FabA</fullName>
    </alternativeName>
    <alternativeName>
        <fullName evidence="1">Beta-hydroxydecanoyl thioester dehydrase</fullName>
    </alternativeName>
    <alternativeName>
        <fullName evidence="1">Trans-2-decenoyl-[acyl-carrier-protein] isomerase</fullName>
        <ecNumber evidence="1">5.3.3.14</ecNumber>
    </alternativeName>
</protein>
<organism>
    <name type="scientific">Escherichia coli O6:K15:H31 (strain 536 / UPEC)</name>
    <dbReference type="NCBI Taxonomy" id="362663"/>
    <lineage>
        <taxon>Bacteria</taxon>
        <taxon>Pseudomonadati</taxon>
        <taxon>Pseudomonadota</taxon>
        <taxon>Gammaproteobacteria</taxon>
        <taxon>Enterobacterales</taxon>
        <taxon>Enterobacteriaceae</taxon>
        <taxon>Escherichia</taxon>
    </lineage>
</organism>
<feature type="chain" id="PRO_0000267728" description="3-hydroxydecanoyl-[acyl-carrier-protein] dehydratase">
    <location>
        <begin position="1"/>
        <end position="172"/>
    </location>
</feature>
<feature type="active site" evidence="1">
    <location>
        <position position="71"/>
    </location>
</feature>